<evidence type="ECO:0000255" key="1">
    <source>
        <dbReference type="HAMAP-Rule" id="MF_00283"/>
    </source>
</evidence>
<organism>
    <name type="scientific">Lactobacillus acidophilus (strain ATCC 700396 / NCK56 / N2 / NCFM)</name>
    <dbReference type="NCBI Taxonomy" id="272621"/>
    <lineage>
        <taxon>Bacteria</taxon>
        <taxon>Bacillati</taxon>
        <taxon>Bacillota</taxon>
        <taxon>Bacilli</taxon>
        <taxon>Lactobacillales</taxon>
        <taxon>Lactobacillaceae</taxon>
        <taxon>Lactobacillus</taxon>
    </lineage>
</organism>
<dbReference type="EC" id="6.1.1.20" evidence="1"/>
<dbReference type="EMBL" id="CP000033">
    <property type="protein sequence ID" value="AAV43337.1"/>
    <property type="molecule type" value="Genomic_DNA"/>
</dbReference>
<dbReference type="RefSeq" id="WP_003548294.1">
    <property type="nucleotide sequence ID" value="NC_006814.3"/>
</dbReference>
<dbReference type="RefSeq" id="YP_194368.1">
    <property type="nucleotide sequence ID" value="NC_006814.3"/>
</dbReference>
<dbReference type="SMR" id="Q5FIY7"/>
<dbReference type="STRING" id="272621.LBA1518"/>
<dbReference type="GeneID" id="93289413"/>
<dbReference type="KEGG" id="lac:LBA1518"/>
<dbReference type="PATRIC" id="fig|272621.13.peg.1442"/>
<dbReference type="eggNOG" id="COG0072">
    <property type="taxonomic scope" value="Bacteria"/>
</dbReference>
<dbReference type="HOGENOM" id="CLU_016891_0_0_9"/>
<dbReference type="OrthoDB" id="9805455at2"/>
<dbReference type="BioCyc" id="LACI272621:G1G49-1486-MONOMER"/>
<dbReference type="Proteomes" id="UP000006381">
    <property type="component" value="Chromosome"/>
</dbReference>
<dbReference type="GO" id="GO:0009328">
    <property type="term" value="C:phenylalanine-tRNA ligase complex"/>
    <property type="evidence" value="ECO:0007669"/>
    <property type="project" value="TreeGrafter"/>
</dbReference>
<dbReference type="GO" id="GO:0005524">
    <property type="term" value="F:ATP binding"/>
    <property type="evidence" value="ECO:0007669"/>
    <property type="project" value="UniProtKB-UniRule"/>
</dbReference>
<dbReference type="GO" id="GO:0140096">
    <property type="term" value="F:catalytic activity, acting on a protein"/>
    <property type="evidence" value="ECO:0007669"/>
    <property type="project" value="UniProtKB-ARBA"/>
</dbReference>
<dbReference type="GO" id="GO:0000287">
    <property type="term" value="F:magnesium ion binding"/>
    <property type="evidence" value="ECO:0007669"/>
    <property type="project" value="UniProtKB-UniRule"/>
</dbReference>
<dbReference type="GO" id="GO:0004826">
    <property type="term" value="F:phenylalanine-tRNA ligase activity"/>
    <property type="evidence" value="ECO:0007669"/>
    <property type="project" value="UniProtKB-UniRule"/>
</dbReference>
<dbReference type="GO" id="GO:0016740">
    <property type="term" value="F:transferase activity"/>
    <property type="evidence" value="ECO:0007669"/>
    <property type="project" value="UniProtKB-ARBA"/>
</dbReference>
<dbReference type="GO" id="GO:0000049">
    <property type="term" value="F:tRNA binding"/>
    <property type="evidence" value="ECO:0007669"/>
    <property type="project" value="UniProtKB-KW"/>
</dbReference>
<dbReference type="GO" id="GO:0006432">
    <property type="term" value="P:phenylalanyl-tRNA aminoacylation"/>
    <property type="evidence" value="ECO:0007669"/>
    <property type="project" value="UniProtKB-UniRule"/>
</dbReference>
<dbReference type="CDD" id="cd00769">
    <property type="entry name" value="PheRS_beta_core"/>
    <property type="match status" value="1"/>
</dbReference>
<dbReference type="CDD" id="cd02796">
    <property type="entry name" value="tRNA_bind_bactPheRS"/>
    <property type="match status" value="1"/>
</dbReference>
<dbReference type="FunFam" id="2.40.50.140:FF:000045">
    <property type="entry name" value="Phenylalanine--tRNA ligase beta subunit"/>
    <property type="match status" value="1"/>
</dbReference>
<dbReference type="FunFam" id="3.30.56.10:FF:000002">
    <property type="entry name" value="Phenylalanine--tRNA ligase beta subunit"/>
    <property type="match status" value="1"/>
</dbReference>
<dbReference type="FunFam" id="3.30.70.380:FF:000001">
    <property type="entry name" value="Phenylalanine--tRNA ligase beta subunit"/>
    <property type="match status" value="1"/>
</dbReference>
<dbReference type="Gene3D" id="3.30.56.10">
    <property type="match status" value="2"/>
</dbReference>
<dbReference type="Gene3D" id="3.30.930.10">
    <property type="entry name" value="Bira Bifunctional Protein, Domain 2"/>
    <property type="match status" value="1"/>
</dbReference>
<dbReference type="Gene3D" id="3.30.70.380">
    <property type="entry name" value="Ferrodoxin-fold anticodon-binding domain"/>
    <property type="match status" value="1"/>
</dbReference>
<dbReference type="Gene3D" id="2.40.50.140">
    <property type="entry name" value="Nucleic acid-binding proteins"/>
    <property type="match status" value="1"/>
</dbReference>
<dbReference type="Gene3D" id="3.50.40.10">
    <property type="entry name" value="Phenylalanyl-trna Synthetase, Chain B, domain 3"/>
    <property type="match status" value="1"/>
</dbReference>
<dbReference type="HAMAP" id="MF_00283">
    <property type="entry name" value="Phe_tRNA_synth_beta1"/>
    <property type="match status" value="1"/>
</dbReference>
<dbReference type="InterPro" id="IPR045864">
    <property type="entry name" value="aa-tRNA-synth_II/BPL/LPL"/>
</dbReference>
<dbReference type="InterPro" id="IPR005146">
    <property type="entry name" value="B3/B4_tRNA-bd"/>
</dbReference>
<dbReference type="InterPro" id="IPR009061">
    <property type="entry name" value="DNA-bd_dom_put_sf"/>
</dbReference>
<dbReference type="InterPro" id="IPR005121">
    <property type="entry name" value="Fdx_antiC-bd"/>
</dbReference>
<dbReference type="InterPro" id="IPR036690">
    <property type="entry name" value="Fdx_antiC-bd_sf"/>
</dbReference>
<dbReference type="InterPro" id="IPR012340">
    <property type="entry name" value="NA-bd_OB-fold"/>
</dbReference>
<dbReference type="InterPro" id="IPR045060">
    <property type="entry name" value="Phe-tRNA-ligase_IIc_bsu"/>
</dbReference>
<dbReference type="InterPro" id="IPR004532">
    <property type="entry name" value="Phe-tRNA-ligase_IIc_bsu_bact"/>
</dbReference>
<dbReference type="InterPro" id="IPR020825">
    <property type="entry name" value="Phe-tRNA_synthase-like_B3/B4"/>
</dbReference>
<dbReference type="InterPro" id="IPR041616">
    <property type="entry name" value="PheRS_beta_core"/>
</dbReference>
<dbReference type="InterPro" id="IPR002547">
    <property type="entry name" value="tRNA-bd_dom"/>
</dbReference>
<dbReference type="InterPro" id="IPR033714">
    <property type="entry name" value="tRNA_bind_bactPheRS"/>
</dbReference>
<dbReference type="InterPro" id="IPR005147">
    <property type="entry name" value="tRNA_synthase_B5-dom"/>
</dbReference>
<dbReference type="NCBIfam" id="TIGR00472">
    <property type="entry name" value="pheT_bact"/>
    <property type="match status" value="1"/>
</dbReference>
<dbReference type="NCBIfam" id="NF045760">
    <property type="entry name" value="YtpR"/>
    <property type="match status" value="1"/>
</dbReference>
<dbReference type="PANTHER" id="PTHR10947:SF0">
    <property type="entry name" value="PHENYLALANINE--TRNA LIGASE BETA SUBUNIT"/>
    <property type="match status" value="1"/>
</dbReference>
<dbReference type="PANTHER" id="PTHR10947">
    <property type="entry name" value="PHENYLALANYL-TRNA SYNTHETASE BETA CHAIN AND LEUCINE-RICH REPEAT-CONTAINING PROTEIN 47"/>
    <property type="match status" value="1"/>
</dbReference>
<dbReference type="Pfam" id="PF03483">
    <property type="entry name" value="B3_4"/>
    <property type="match status" value="1"/>
</dbReference>
<dbReference type="Pfam" id="PF03484">
    <property type="entry name" value="B5"/>
    <property type="match status" value="1"/>
</dbReference>
<dbReference type="Pfam" id="PF03147">
    <property type="entry name" value="FDX-ACB"/>
    <property type="match status" value="1"/>
</dbReference>
<dbReference type="Pfam" id="PF01588">
    <property type="entry name" value="tRNA_bind"/>
    <property type="match status" value="1"/>
</dbReference>
<dbReference type="Pfam" id="PF17759">
    <property type="entry name" value="tRNA_synthFbeta"/>
    <property type="match status" value="1"/>
</dbReference>
<dbReference type="SMART" id="SM00873">
    <property type="entry name" value="B3_4"/>
    <property type="match status" value="1"/>
</dbReference>
<dbReference type="SMART" id="SM00874">
    <property type="entry name" value="B5"/>
    <property type="match status" value="1"/>
</dbReference>
<dbReference type="SMART" id="SM00896">
    <property type="entry name" value="FDX-ACB"/>
    <property type="match status" value="1"/>
</dbReference>
<dbReference type="SUPFAM" id="SSF54991">
    <property type="entry name" value="Anticodon-binding domain of PheRS"/>
    <property type="match status" value="1"/>
</dbReference>
<dbReference type="SUPFAM" id="SSF55681">
    <property type="entry name" value="Class II aaRS and biotin synthetases"/>
    <property type="match status" value="1"/>
</dbReference>
<dbReference type="SUPFAM" id="SSF50249">
    <property type="entry name" value="Nucleic acid-binding proteins"/>
    <property type="match status" value="1"/>
</dbReference>
<dbReference type="SUPFAM" id="SSF56037">
    <property type="entry name" value="PheT/TilS domain"/>
    <property type="match status" value="1"/>
</dbReference>
<dbReference type="SUPFAM" id="SSF46955">
    <property type="entry name" value="Putative DNA-binding domain"/>
    <property type="match status" value="1"/>
</dbReference>
<dbReference type="PROSITE" id="PS51483">
    <property type="entry name" value="B5"/>
    <property type="match status" value="1"/>
</dbReference>
<dbReference type="PROSITE" id="PS51447">
    <property type="entry name" value="FDX_ACB"/>
    <property type="match status" value="1"/>
</dbReference>
<dbReference type="PROSITE" id="PS50886">
    <property type="entry name" value="TRBD"/>
    <property type="match status" value="1"/>
</dbReference>
<gene>
    <name evidence="1" type="primary">pheT</name>
    <name type="ordered locus">LBA1518</name>
</gene>
<reference key="1">
    <citation type="journal article" date="2005" name="Proc. Natl. Acad. Sci. U.S.A.">
        <title>Complete genome sequence of the probiotic lactic acid bacterium Lactobacillus acidophilus NCFM.</title>
        <authorList>
            <person name="Altermann E."/>
            <person name="Russell W.M."/>
            <person name="Azcarate-Peril M.A."/>
            <person name="Barrangou R."/>
            <person name="Buck B.L."/>
            <person name="McAuliffe O."/>
            <person name="Souther N."/>
            <person name="Dobson A."/>
            <person name="Duong T."/>
            <person name="Callanan M."/>
            <person name="Lick S."/>
            <person name="Hamrick A."/>
            <person name="Cano R."/>
            <person name="Klaenhammer T.R."/>
        </authorList>
    </citation>
    <scope>NUCLEOTIDE SEQUENCE [LARGE SCALE GENOMIC DNA]</scope>
    <source>
        <strain>ATCC 700396 / NCK56 / N2 / NCFM</strain>
    </source>
</reference>
<protein>
    <recommendedName>
        <fullName evidence="1">Phenylalanine--tRNA ligase beta subunit</fullName>
        <ecNumber evidence="1">6.1.1.20</ecNumber>
    </recommendedName>
    <alternativeName>
        <fullName evidence="1">Phenylalanyl-tRNA synthetase beta subunit</fullName>
        <shortName evidence="1">PheRS</shortName>
    </alternativeName>
</protein>
<sequence length="804" mass="89122">MLVSYNWLQDFLNLDQEPHALAEKITRTGVEIADVKHPEEGLKKLVVGKVIDCEGVEGTHLHLTHVDVGEDEPLQIVCGAPNVAAGELVIVALHGARIAGNEKIKKGKIRGIESYGMICGLQEIGFSDSVVPEEFADGIYVFPEDADVKPGQDVYEALGMDDYILDFDITPNRADTLGMEGAAYEVGAIVDQKPKIGDVVLKEDGPDWTSSLEANVDEKLAPKFYLRKLTGVKIQPSPLWMQRRLWNAGIRPINNVVDVTNYVMLLTGQPMHAYDAKTFETGKLEVRLANKGEKLTLLNEKEVELDPRDIIITDGEKPVMMAGVMGGLNSEITSETTDVILESAIFDPTLVRKSALRHANRTEASSRYEKGVNWDATEKAINMAALLLRNDAQATIDEGIIKATDTKREPVVVKTTVSHINDVLGSEISAEEMIKIFDRLGFVVDQDGDNIAVHVPNRRWDISIPADLVEEVGRIYGYDNLKSTQPLLAETHGGYSEKEEMMRRMKAIVEGQGLMEAISYSLTSPEKAVRYTKDPKDIVKVQMPLNSSRSVMRQNLMTGLVDAASYNFARKQTQLALFEQGRVYDHEGGTFNEHEHLAALYSGNTFAENWQHLTQKVDFYFVKGQLTNLFTAIGIDPEKVTYEAAPILGMHPTRTAAIYIDKQYVGMIGMIAHAVTLADKALRGAELYGYEINLDTIIPMLTKGMTAVPAPKFPAIERDLSLLVDKEITNQEVENVIKSNAGKYLVDLKVIDVYEGSHIAIGKKSFAYNLTFLNRKDTLTDKVVNNAMDKIIAGLENDLDIKVR</sequence>
<accession>Q5FIY7</accession>
<proteinExistence type="inferred from homology"/>
<keyword id="KW-0030">Aminoacyl-tRNA synthetase</keyword>
<keyword id="KW-0067">ATP-binding</keyword>
<keyword id="KW-0963">Cytoplasm</keyword>
<keyword id="KW-0436">Ligase</keyword>
<keyword id="KW-0460">Magnesium</keyword>
<keyword id="KW-0479">Metal-binding</keyword>
<keyword id="KW-0547">Nucleotide-binding</keyword>
<keyword id="KW-0648">Protein biosynthesis</keyword>
<keyword id="KW-1185">Reference proteome</keyword>
<keyword id="KW-0694">RNA-binding</keyword>
<keyword id="KW-0820">tRNA-binding</keyword>
<name>SYFB_LACAC</name>
<comment type="catalytic activity">
    <reaction evidence="1">
        <text>tRNA(Phe) + L-phenylalanine + ATP = L-phenylalanyl-tRNA(Phe) + AMP + diphosphate + H(+)</text>
        <dbReference type="Rhea" id="RHEA:19413"/>
        <dbReference type="Rhea" id="RHEA-COMP:9668"/>
        <dbReference type="Rhea" id="RHEA-COMP:9699"/>
        <dbReference type="ChEBI" id="CHEBI:15378"/>
        <dbReference type="ChEBI" id="CHEBI:30616"/>
        <dbReference type="ChEBI" id="CHEBI:33019"/>
        <dbReference type="ChEBI" id="CHEBI:58095"/>
        <dbReference type="ChEBI" id="CHEBI:78442"/>
        <dbReference type="ChEBI" id="CHEBI:78531"/>
        <dbReference type="ChEBI" id="CHEBI:456215"/>
        <dbReference type="EC" id="6.1.1.20"/>
    </reaction>
</comment>
<comment type="cofactor">
    <cofactor evidence="1">
        <name>Mg(2+)</name>
        <dbReference type="ChEBI" id="CHEBI:18420"/>
    </cofactor>
    <text evidence="1">Binds 2 magnesium ions per tetramer.</text>
</comment>
<comment type="subunit">
    <text evidence="1">Tetramer of two alpha and two beta subunits.</text>
</comment>
<comment type="subcellular location">
    <subcellularLocation>
        <location evidence="1">Cytoplasm</location>
    </subcellularLocation>
</comment>
<comment type="similarity">
    <text evidence="1">Belongs to the phenylalanyl-tRNA synthetase beta subunit family. Type 1 subfamily.</text>
</comment>
<feature type="chain" id="PRO_0000126896" description="Phenylalanine--tRNA ligase beta subunit">
    <location>
        <begin position="1"/>
        <end position="804"/>
    </location>
</feature>
<feature type="domain" description="tRNA-binding" evidence="1">
    <location>
        <begin position="39"/>
        <end position="155"/>
    </location>
</feature>
<feature type="domain" description="B5" evidence="1">
    <location>
        <begin position="408"/>
        <end position="483"/>
    </location>
</feature>
<feature type="domain" description="FDX-ACB" evidence="1">
    <location>
        <begin position="711"/>
        <end position="804"/>
    </location>
</feature>
<feature type="binding site" evidence="1">
    <location>
        <position position="461"/>
    </location>
    <ligand>
        <name>Mg(2+)</name>
        <dbReference type="ChEBI" id="CHEBI:18420"/>
        <note>shared with alpha subunit</note>
    </ligand>
</feature>
<feature type="binding site" evidence="1">
    <location>
        <position position="467"/>
    </location>
    <ligand>
        <name>Mg(2+)</name>
        <dbReference type="ChEBI" id="CHEBI:18420"/>
        <note>shared with alpha subunit</note>
    </ligand>
</feature>
<feature type="binding site" evidence="1">
    <location>
        <position position="470"/>
    </location>
    <ligand>
        <name>Mg(2+)</name>
        <dbReference type="ChEBI" id="CHEBI:18420"/>
        <note>shared with alpha subunit</note>
    </ligand>
</feature>
<feature type="binding site" evidence="1">
    <location>
        <position position="471"/>
    </location>
    <ligand>
        <name>Mg(2+)</name>
        <dbReference type="ChEBI" id="CHEBI:18420"/>
        <note>shared with alpha subunit</note>
    </ligand>
</feature>